<sequence length="98" mass="10346">MSVSIKPLEDRIVVRPLEAEQTTASGLVIPDTAKEKPQEGQVVAVGPGRVAENGNRVPVDVAEGDVVLYSKYGGTEVKVGGEEYLVLSARDVLAVVTK</sequence>
<reference key="1">
    <citation type="journal article" date="2010" name="J. Bacteriol.">
        <title>Genome sequence of the Fleming strain of Micrococcus luteus, a simple free-living actinobacterium.</title>
        <authorList>
            <person name="Young M."/>
            <person name="Artsatbanov V."/>
            <person name="Beller H.R."/>
            <person name="Chandra G."/>
            <person name="Chater K.F."/>
            <person name="Dover L.G."/>
            <person name="Goh E.B."/>
            <person name="Kahan T."/>
            <person name="Kaprelyants A.S."/>
            <person name="Kyrpides N."/>
            <person name="Lapidus A."/>
            <person name="Lowry S.R."/>
            <person name="Lykidis A."/>
            <person name="Mahillon J."/>
            <person name="Markowitz V."/>
            <person name="Mavromatis K."/>
            <person name="Mukamolova G.V."/>
            <person name="Oren A."/>
            <person name="Rokem J.S."/>
            <person name="Smith M.C."/>
            <person name="Young D.I."/>
            <person name="Greenblatt C.L."/>
        </authorList>
    </citation>
    <scope>NUCLEOTIDE SEQUENCE [LARGE SCALE GENOMIC DNA]</scope>
    <source>
        <strain>ATCC 4698 / DSM 20030 / JCM 1464 / CCM 169 / CCUG 5858 / IAM 1056 / NBRC 3333 / NCIMB 9278 / NCTC 2665 / VKM Ac-2230</strain>
    </source>
</reference>
<comment type="function">
    <text evidence="1">Together with the chaperonin GroEL, plays an essential role in assisting protein folding. The GroEL-GroES system forms a nano-cage that allows encapsulation of the non-native substrate proteins and provides a physical environment optimized to promote and accelerate protein folding. GroES binds to the apical surface of the GroEL ring, thereby capping the opening of the GroEL channel.</text>
</comment>
<comment type="subunit">
    <text evidence="1">Heptamer of 7 subunits arranged in a ring. Interacts with the chaperonin GroEL.</text>
</comment>
<comment type="subcellular location">
    <subcellularLocation>
        <location evidence="1">Cytoplasm</location>
    </subcellularLocation>
</comment>
<comment type="similarity">
    <text evidence="1">Belongs to the GroES chaperonin family.</text>
</comment>
<accession>C5CC02</accession>
<evidence type="ECO:0000255" key="1">
    <source>
        <dbReference type="HAMAP-Rule" id="MF_00580"/>
    </source>
</evidence>
<proteinExistence type="inferred from homology"/>
<name>CH10_MICLC</name>
<dbReference type="EMBL" id="CP001628">
    <property type="protein sequence ID" value="ACS31143.1"/>
    <property type="molecule type" value="Genomic_DNA"/>
</dbReference>
<dbReference type="RefSeq" id="WP_002857590.1">
    <property type="nucleotide sequence ID" value="NZ_WBMF01000033.1"/>
</dbReference>
<dbReference type="SMR" id="C5CC02"/>
<dbReference type="STRING" id="465515.Mlut_16550"/>
<dbReference type="EnsemblBacteria" id="ACS31143">
    <property type="protein sequence ID" value="ACS31143"/>
    <property type="gene ID" value="Mlut_16550"/>
</dbReference>
<dbReference type="GeneID" id="93364331"/>
<dbReference type="KEGG" id="mlu:Mlut_16550"/>
<dbReference type="eggNOG" id="COG0234">
    <property type="taxonomic scope" value="Bacteria"/>
</dbReference>
<dbReference type="HOGENOM" id="CLU_132825_2_0_11"/>
<dbReference type="Proteomes" id="UP000000738">
    <property type="component" value="Chromosome"/>
</dbReference>
<dbReference type="GO" id="GO:0005737">
    <property type="term" value="C:cytoplasm"/>
    <property type="evidence" value="ECO:0007669"/>
    <property type="project" value="UniProtKB-SubCell"/>
</dbReference>
<dbReference type="GO" id="GO:0005524">
    <property type="term" value="F:ATP binding"/>
    <property type="evidence" value="ECO:0007669"/>
    <property type="project" value="InterPro"/>
</dbReference>
<dbReference type="GO" id="GO:0046872">
    <property type="term" value="F:metal ion binding"/>
    <property type="evidence" value="ECO:0007669"/>
    <property type="project" value="TreeGrafter"/>
</dbReference>
<dbReference type="GO" id="GO:0044183">
    <property type="term" value="F:protein folding chaperone"/>
    <property type="evidence" value="ECO:0007669"/>
    <property type="project" value="InterPro"/>
</dbReference>
<dbReference type="GO" id="GO:0051087">
    <property type="term" value="F:protein-folding chaperone binding"/>
    <property type="evidence" value="ECO:0007669"/>
    <property type="project" value="TreeGrafter"/>
</dbReference>
<dbReference type="GO" id="GO:0051082">
    <property type="term" value="F:unfolded protein binding"/>
    <property type="evidence" value="ECO:0007669"/>
    <property type="project" value="TreeGrafter"/>
</dbReference>
<dbReference type="GO" id="GO:0051085">
    <property type="term" value="P:chaperone cofactor-dependent protein refolding"/>
    <property type="evidence" value="ECO:0007669"/>
    <property type="project" value="TreeGrafter"/>
</dbReference>
<dbReference type="CDD" id="cd00320">
    <property type="entry name" value="cpn10"/>
    <property type="match status" value="1"/>
</dbReference>
<dbReference type="FunFam" id="2.30.33.40:FF:000001">
    <property type="entry name" value="10 kDa chaperonin"/>
    <property type="match status" value="1"/>
</dbReference>
<dbReference type="Gene3D" id="2.30.33.40">
    <property type="entry name" value="GroES chaperonin"/>
    <property type="match status" value="1"/>
</dbReference>
<dbReference type="HAMAP" id="MF_00580">
    <property type="entry name" value="CH10"/>
    <property type="match status" value="1"/>
</dbReference>
<dbReference type="InterPro" id="IPR020818">
    <property type="entry name" value="Chaperonin_GroES"/>
</dbReference>
<dbReference type="InterPro" id="IPR037124">
    <property type="entry name" value="Chaperonin_GroES_sf"/>
</dbReference>
<dbReference type="InterPro" id="IPR018369">
    <property type="entry name" value="Chaprnonin_Cpn10_CS"/>
</dbReference>
<dbReference type="InterPro" id="IPR011032">
    <property type="entry name" value="GroES-like_sf"/>
</dbReference>
<dbReference type="NCBIfam" id="NF001527">
    <property type="entry name" value="PRK00364.1-2"/>
    <property type="match status" value="1"/>
</dbReference>
<dbReference type="NCBIfam" id="NF001530">
    <property type="entry name" value="PRK00364.1-6"/>
    <property type="match status" value="1"/>
</dbReference>
<dbReference type="NCBIfam" id="NF001531">
    <property type="entry name" value="PRK00364.2-2"/>
    <property type="match status" value="1"/>
</dbReference>
<dbReference type="NCBIfam" id="NF001533">
    <property type="entry name" value="PRK00364.2-4"/>
    <property type="match status" value="1"/>
</dbReference>
<dbReference type="NCBIfam" id="NF001534">
    <property type="entry name" value="PRK00364.2-5"/>
    <property type="match status" value="1"/>
</dbReference>
<dbReference type="PANTHER" id="PTHR10772">
    <property type="entry name" value="10 KDA HEAT SHOCK PROTEIN"/>
    <property type="match status" value="1"/>
</dbReference>
<dbReference type="PANTHER" id="PTHR10772:SF58">
    <property type="entry name" value="CO-CHAPERONIN GROES"/>
    <property type="match status" value="1"/>
</dbReference>
<dbReference type="Pfam" id="PF00166">
    <property type="entry name" value="Cpn10"/>
    <property type="match status" value="1"/>
</dbReference>
<dbReference type="PRINTS" id="PR00297">
    <property type="entry name" value="CHAPERONIN10"/>
</dbReference>
<dbReference type="SMART" id="SM00883">
    <property type="entry name" value="Cpn10"/>
    <property type="match status" value="1"/>
</dbReference>
<dbReference type="SUPFAM" id="SSF50129">
    <property type="entry name" value="GroES-like"/>
    <property type="match status" value="1"/>
</dbReference>
<dbReference type="PROSITE" id="PS00681">
    <property type="entry name" value="CHAPERONINS_CPN10"/>
    <property type="match status" value="1"/>
</dbReference>
<keyword id="KW-0143">Chaperone</keyword>
<keyword id="KW-0963">Cytoplasm</keyword>
<keyword id="KW-1185">Reference proteome</keyword>
<gene>
    <name evidence="1" type="primary">groES</name>
    <name evidence="1" type="synonym">groS</name>
    <name type="ordered locus">Mlut_16550</name>
</gene>
<protein>
    <recommendedName>
        <fullName evidence="1">Co-chaperonin GroES</fullName>
    </recommendedName>
    <alternativeName>
        <fullName evidence="1">10 kDa chaperonin</fullName>
    </alternativeName>
    <alternativeName>
        <fullName evidence="1">Chaperonin-10</fullName>
        <shortName evidence="1">Cpn10</shortName>
    </alternativeName>
</protein>
<organism>
    <name type="scientific">Micrococcus luteus (strain ATCC 4698 / DSM 20030 / JCM 1464 / CCM 169 / CCUG 5858 / IAM 1056 / NBRC 3333 / NCIMB 9278 / NCTC 2665 / VKM Ac-2230)</name>
    <name type="common">Micrococcus lysodeikticus</name>
    <dbReference type="NCBI Taxonomy" id="465515"/>
    <lineage>
        <taxon>Bacteria</taxon>
        <taxon>Bacillati</taxon>
        <taxon>Actinomycetota</taxon>
        <taxon>Actinomycetes</taxon>
        <taxon>Micrococcales</taxon>
        <taxon>Micrococcaceae</taxon>
        <taxon>Micrococcus</taxon>
    </lineage>
</organism>
<feature type="chain" id="PRO_1000212121" description="Co-chaperonin GroES">
    <location>
        <begin position="1"/>
        <end position="98"/>
    </location>
</feature>